<reference key="1">
    <citation type="journal article" date="2003" name="Nature">
        <title>The DNA sequence of human chromosome 7.</title>
        <authorList>
            <person name="Hillier L.W."/>
            <person name="Fulton R.S."/>
            <person name="Fulton L.A."/>
            <person name="Graves T.A."/>
            <person name="Pepin K.H."/>
            <person name="Wagner-McPherson C."/>
            <person name="Layman D."/>
            <person name="Maas J."/>
            <person name="Jaeger S."/>
            <person name="Walker R."/>
            <person name="Wylie K."/>
            <person name="Sekhon M."/>
            <person name="Becker M.C."/>
            <person name="O'Laughlin M.D."/>
            <person name="Schaller M.E."/>
            <person name="Fewell G.A."/>
            <person name="Delehaunty K.D."/>
            <person name="Miner T.L."/>
            <person name="Nash W.E."/>
            <person name="Cordes M."/>
            <person name="Du H."/>
            <person name="Sun H."/>
            <person name="Edwards J."/>
            <person name="Bradshaw-Cordum H."/>
            <person name="Ali J."/>
            <person name="Andrews S."/>
            <person name="Isak A."/>
            <person name="Vanbrunt A."/>
            <person name="Nguyen C."/>
            <person name="Du F."/>
            <person name="Lamar B."/>
            <person name="Courtney L."/>
            <person name="Kalicki J."/>
            <person name="Ozersky P."/>
            <person name="Bielicki L."/>
            <person name="Scott K."/>
            <person name="Holmes A."/>
            <person name="Harkins R."/>
            <person name="Harris A."/>
            <person name="Strong C.M."/>
            <person name="Hou S."/>
            <person name="Tomlinson C."/>
            <person name="Dauphin-Kohlberg S."/>
            <person name="Kozlowicz-Reilly A."/>
            <person name="Leonard S."/>
            <person name="Rohlfing T."/>
            <person name="Rock S.M."/>
            <person name="Tin-Wollam A.-M."/>
            <person name="Abbott A."/>
            <person name="Minx P."/>
            <person name="Maupin R."/>
            <person name="Strowmatt C."/>
            <person name="Latreille P."/>
            <person name="Miller N."/>
            <person name="Johnson D."/>
            <person name="Murray J."/>
            <person name="Woessner J.P."/>
            <person name="Wendl M.C."/>
            <person name="Yang S.-P."/>
            <person name="Schultz B.R."/>
            <person name="Wallis J.W."/>
            <person name="Spieth J."/>
            <person name="Bieri T.A."/>
            <person name="Nelson J.O."/>
            <person name="Berkowicz N."/>
            <person name="Wohldmann P.E."/>
            <person name="Cook L.L."/>
            <person name="Hickenbotham M.T."/>
            <person name="Eldred J."/>
            <person name="Williams D."/>
            <person name="Bedell J.A."/>
            <person name="Mardis E.R."/>
            <person name="Clifton S.W."/>
            <person name="Chissoe S.L."/>
            <person name="Marra M.A."/>
            <person name="Raymond C."/>
            <person name="Haugen E."/>
            <person name="Gillett W."/>
            <person name="Zhou Y."/>
            <person name="James R."/>
            <person name="Phelps K."/>
            <person name="Iadanoto S."/>
            <person name="Bubb K."/>
            <person name="Simms E."/>
            <person name="Levy R."/>
            <person name="Clendenning J."/>
            <person name="Kaul R."/>
            <person name="Kent W.J."/>
            <person name="Furey T.S."/>
            <person name="Baertsch R.A."/>
            <person name="Brent M.R."/>
            <person name="Keibler E."/>
            <person name="Flicek P."/>
            <person name="Bork P."/>
            <person name="Suyama M."/>
            <person name="Bailey J.A."/>
            <person name="Portnoy M.E."/>
            <person name="Torrents D."/>
            <person name="Chinwalla A.T."/>
            <person name="Gish W.R."/>
            <person name="Eddy S.R."/>
            <person name="McPherson J.D."/>
            <person name="Olson M.V."/>
            <person name="Eichler E.E."/>
            <person name="Green E.D."/>
            <person name="Waterston R.H."/>
            <person name="Wilson R.K."/>
        </authorList>
    </citation>
    <scope>NUCLEOTIDE SEQUENCE [LARGE SCALE GENOMIC DNA] (IMGT ALLELE TRBJ1-6*01)</scope>
</reference>
<reference key="2">
    <citation type="book" date="2001" name="The T Cell Receptor FactsBook.">
        <title>The T Cell Receptor FactsBook.</title>
        <editorList>
            <person name="Lefranc M.P."/>
            <person name="Lefranc G."/>
        </editorList>
        <authorList>
            <person name="Lefranc M.P."/>
            <person name="Lefranc G."/>
        </authorList>
    </citation>
    <scope>NOMENCLATURE</scope>
</reference>
<reference key="3">
    <citation type="journal article" date="2004" name="Nat. Rev. Immunol.">
        <title>The many important facets of T-cell repertoire diversity.</title>
        <authorList>
            <person name="Nikolich-Zugich J."/>
            <person name="Slifka M.K."/>
            <person name="Messaoudi I."/>
        </authorList>
    </citation>
    <scope>REVIEW ON T CELL REPERTOIRE DIVERSITY</scope>
</reference>
<reference key="4">
    <citation type="journal article" date="2010" name="Cold Spring Harb. Perspect. Biol.">
        <title>Structural biology of the T-cell receptor: insights into receptor assembly, ligand recognition, and initiation of signaling.</title>
        <authorList>
            <person name="Wucherpfennig K.W."/>
            <person name="Gagnon E."/>
            <person name="Call M.J."/>
            <person name="Huseby E.S."/>
            <person name="Call M.E."/>
        </authorList>
    </citation>
    <scope>REVIEW ON T CELL RECEPTOR-CD3 COMPLEX ASSEMBLY</scope>
    <scope>SUBCELLULAR LOCATION</scope>
</reference>
<reference key="5">
    <citation type="journal article" date="2013" name="Nat. Rev. Immunol.">
        <title>T cell receptor signalling networks: branched, diversified and bounded.</title>
        <authorList>
            <person name="Brownlie R.J."/>
            <person name="Zamoyska R."/>
        </authorList>
    </citation>
    <scope>REVIEW ON T CELL RECEPTOR SIGNALING</scope>
</reference>
<reference key="6">
    <citation type="journal article" date="2014" name="Front. Immunol.">
        <title>Immunoglobulin and T Cell Receptor Genes: IMGT((R)) and the Birth and Rise of Immunoinformatics.</title>
        <authorList>
            <person name="Lefranc M.P."/>
        </authorList>
    </citation>
    <scope>NOMENCLATURE</scope>
</reference>
<reference key="7">
    <citation type="journal article" date="2015" name="Annu. Rev. Immunol.">
        <title>T cell antigen receptor recognition of antigen-presenting molecules.</title>
        <authorList>
            <person name="Rossjohn J."/>
            <person name="Gras S."/>
            <person name="Miles J.J."/>
            <person name="Turner S.J."/>
            <person name="Godfrey D.I."/>
            <person name="McCluskey J."/>
        </authorList>
    </citation>
    <scope>REVIEW ON FUNCTION</scope>
</reference>
<keyword id="KW-1064">Adaptive immunity</keyword>
<keyword id="KW-1003">Cell membrane</keyword>
<keyword id="KW-0391">Immunity</keyword>
<keyword id="KW-0472">Membrane</keyword>
<keyword id="KW-0675">Receptor</keyword>
<keyword id="KW-1185">Reference proteome</keyword>
<keyword id="KW-1279">T cell receptor</keyword>
<dbReference type="EMBL" id="AC239618">
    <property type="status" value="NOT_ANNOTATED_CDS"/>
    <property type="molecule type" value="Genomic_DNA"/>
</dbReference>
<dbReference type="EMBL" id="AC245427">
    <property type="status" value="NOT_ANNOTATED_CDS"/>
    <property type="molecule type" value="Genomic_DNA"/>
</dbReference>
<dbReference type="IMGT_GENE-DB" id="TRBJ1-6"/>
<dbReference type="BioMuta" id="ENSG00000281957"/>
<dbReference type="Ensembl" id="ENST00000632228.1">
    <property type="protein sequence ID" value="ENSP00000488155.1"/>
    <property type="gene ID" value="ENSG00000281957.1"/>
</dbReference>
<dbReference type="Ensembl" id="ENST00000633713.1">
    <property type="protein sequence ID" value="ENSP00000488283.1"/>
    <property type="gene ID" value="ENSG00000282780.1"/>
</dbReference>
<dbReference type="AGR" id="HGNC:12167"/>
<dbReference type="GeneCards" id="TRBJ1-6"/>
<dbReference type="HGNC" id="HGNC:12167">
    <property type="gene designation" value="TRBJ1-6"/>
</dbReference>
<dbReference type="HPA" id="ENSG00000282780">
    <property type="expression patterns" value="Tissue enriched (lymphoid)"/>
</dbReference>
<dbReference type="neXtProt" id="NX_A0A0J9YWX3"/>
<dbReference type="VEuPathDB" id="HostDB:ENSG00000282780"/>
<dbReference type="InParanoid" id="A0A0J9YWX3"/>
<dbReference type="PAN-GO" id="A0A0J9YWX3">
    <property type="GO annotations" value="0 GO annotations based on evolutionary models"/>
</dbReference>
<dbReference type="ChiTaRS" id="TRBJ1-6">
    <property type="organism name" value="human"/>
</dbReference>
<dbReference type="PRO" id="PR:A0A0J9YWX3"/>
<dbReference type="Proteomes" id="UP000005640">
    <property type="component" value="Chromosome 7"/>
</dbReference>
<dbReference type="Bgee" id="ENSG00000282780">
    <property type="expression patterns" value="Expressed in granulocyte and 82 other cell types or tissues"/>
</dbReference>
<dbReference type="GO" id="GO:0042101">
    <property type="term" value="C:T cell receptor complex"/>
    <property type="evidence" value="ECO:0007669"/>
    <property type="project" value="UniProtKB-KW"/>
</dbReference>
<dbReference type="GO" id="GO:0002250">
    <property type="term" value="P:adaptive immune response"/>
    <property type="evidence" value="ECO:0007669"/>
    <property type="project" value="UniProtKB-KW"/>
</dbReference>
<feature type="chain" id="PRO_0000447253" description="T cell receptor beta joining 1-6">
    <location>
        <begin position="1" status="less than"/>
        <end position="17" status="greater than"/>
    </location>
</feature>
<feature type="non-terminal residue">
    <location>
        <position position="1"/>
    </location>
</feature>
<feature type="non-terminal residue">
    <location>
        <position position="17"/>
    </location>
</feature>
<gene>
    <name evidence="6 8" type="primary">TRBJ1-6</name>
</gene>
<sequence>SYNSPLHFGNGTRLTVT</sequence>
<accession>A0A0J9YWX3</accession>
<organism>
    <name type="scientific">Homo sapiens</name>
    <name type="common">Human</name>
    <dbReference type="NCBI Taxonomy" id="9606"/>
    <lineage>
        <taxon>Eukaryota</taxon>
        <taxon>Metazoa</taxon>
        <taxon>Chordata</taxon>
        <taxon>Craniata</taxon>
        <taxon>Vertebrata</taxon>
        <taxon>Euteleostomi</taxon>
        <taxon>Mammalia</taxon>
        <taxon>Eutheria</taxon>
        <taxon>Euarchontoglires</taxon>
        <taxon>Primates</taxon>
        <taxon>Haplorrhini</taxon>
        <taxon>Catarrhini</taxon>
        <taxon>Hominidae</taxon>
        <taxon>Homo</taxon>
    </lineage>
</organism>
<name>TJB16_HUMAN</name>
<protein>
    <recommendedName>
        <fullName evidence="6">T cell receptor beta joining 1-6</fullName>
    </recommendedName>
</protein>
<comment type="function">
    <text evidence="1 3 4 5">J region of the variable domain of T cell receptor (TR) beta chain that participates in the antigen recognition (PubMed:24600447). Alpha-beta T cell receptors are antigen specific receptors which are essential to the immune response and are present on the cell surface of T lymphocytes. Recognize peptide-major histocompatibility (MH) (pMH) complexes that are displayed by antigen presenting cells (APC), a prerequisite for efficient T cell adaptive immunity against pathogens (PubMed:25493333). Binding of alpha-beta TR to pMH complex initiates TR-CD3 clustering on the cell surface and intracellular activation of LCK that phosphorylates the ITAM motifs of CD3G, CD3D, CD3E and CD247 enabling the recruitment of ZAP70. In turn ZAP70 phosphorylates LAT, which recruits numerous signaling molecules to form the LAT signalosome. The LAT signalosome propagates signal branching to three major signaling pathways, the calcium, the mitogen-activated protein kinase (MAPK) kinase and the nuclear factor NF-kappa-B (NF-kB) pathways, leading to the mobilization of transcription factors that are critical for gene expression and essential for T cell growth and differentiation (PubMed:23524462). The T cell repertoire is generated in the thymus, by V-(D)-J rearrangement. This repertoire is then shaped by intrathymic selection events to generate a peripheral T cell pool of self-MH restricted, non-autoaggressive T cells. Post-thymic interaction of alpha-beta TR with the pMH complexes shapes TR structural and functional avidity (PubMed:15040585).</text>
</comment>
<comment type="subunit">
    <text evidence="2">Alpha-beta TR is a heterodimer composed of an alpha and beta chain; disulfide-linked. The alpha-beta TR is associated with the transmembrane signaling CD3 coreceptor proteins to form the TR-CD3 (TcR or TCR). The assembly of alpha-beta TR heterodimers with CD3 occurs in the endoplasmic reticulum where a single alpha-beta TR heterodimer associates with one CD3D-CD3E heterodimer, one CD3G-CD3E heterodimer and one CD247 homodimer forming a stable octameric structure. CD3D-CD3E and CD3G-CD3E heterodimers preferentially associate with TR alpha and TR beta chains, respectively. The association of the CD247 homodimer is the last step of TcR assembly in the endoplasmic reticulum and is required for transport to the cell surface.</text>
</comment>
<comment type="subcellular location">
    <subcellularLocation>
        <location evidence="2">Cell membrane</location>
    </subcellularLocation>
</comment>
<comment type="polymorphism">
    <text evidence="7">There are two alleles, IMGT allele TRBJ1-6*01 and TRBJ1-6*02, differing by a single nucleotide that does not change the amino acid sequence.</text>
</comment>
<evidence type="ECO:0000303" key="1">
    <source>
    </source>
</evidence>
<evidence type="ECO:0000303" key="2">
    <source>
    </source>
</evidence>
<evidence type="ECO:0000303" key="3">
    <source>
    </source>
</evidence>
<evidence type="ECO:0000303" key="4">
    <source>
    </source>
</evidence>
<evidence type="ECO:0000303" key="5">
    <source>
    </source>
</evidence>
<evidence type="ECO:0000303" key="6">
    <source ref="2"/>
</evidence>
<evidence type="ECO:0000305" key="7"/>
<evidence type="ECO:0000312" key="8">
    <source>
        <dbReference type="HGNC" id="HGNC:12167"/>
    </source>
</evidence>
<proteinExistence type="predicted"/>